<accession>O83519</accession>
<reference key="1">
    <citation type="journal article" date="1998" name="Science">
        <title>Complete genome sequence of Treponema pallidum, the syphilis spirochete.</title>
        <authorList>
            <person name="Fraser C.M."/>
            <person name="Norris S.J."/>
            <person name="Weinstock G.M."/>
            <person name="White O."/>
            <person name="Sutton G.G."/>
            <person name="Dodson R.J."/>
            <person name="Gwinn M.L."/>
            <person name="Hickey E.K."/>
            <person name="Clayton R.A."/>
            <person name="Ketchum K.A."/>
            <person name="Sodergren E."/>
            <person name="Hardham J.M."/>
            <person name="McLeod M.P."/>
            <person name="Salzberg S.L."/>
            <person name="Peterson J.D."/>
            <person name="Khalak H.G."/>
            <person name="Richardson D.L."/>
            <person name="Howell J.K."/>
            <person name="Chidambaram M."/>
            <person name="Utterback T.R."/>
            <person name="McDonald L.A."/>
            <person name="Artiach P."/>
            <person name="Bowman C."/>
            <person name="Cotton M.D."/>
            <person name="Fujii C."/>
            <person name="Garland S.A."/>
            <person name="Hatch B."/>
            <person name="Horst K."/>
            <person name="Roberts K.M."/>
            <person name="Sandusky M."/>
            <person name="Weidman J.F."/>
            <person name="Smith H.O."/>
            <person name="Venter J.C."/>
        </authorList>
    </citation>
    <scope>NUCLEOTIDE SEQUENCE [LARGE SCALE GENOMIC DNA]</scope>
    <source>
        <strain>Nichols</strain>
    </source>
</reference>
<protein>
    <recommendedName>
        <fullName>Trigger factor</fullName>
        <shortName>TF</shortName>
        <ecNumber>5.2.1.8</ecNumber>
    </recommendedName>
    <alternativeName>
        <fullName>PPIase</fullName>
    </alternativeName>
</protein>
<feature type="chain" id="PRO_0000179455" description="Trigger factor">
    <location>
        <begin position="1"/>
        <end position="442"/>
    </location>
</feature>
<feature type="domain" description="PPIase FKBP-type">
    <location>
        <begin position="170"/>
        <end position="250"/>
    </location>
</feature>
<comment type="function">
    <text evidence="1">Involved in protein export. Acts as a chaperone by maintaining the newly synthesized protein in an open conformation. Functions as a peptidyl-prolyl cis-trans isomerase (By similarity).</text>
</comment>
<comment type="catalytic activity">
    <reaction>
        <text>[protein]-peptidylproline (omega=180) = [protein]-peptidylproline (omega=0)</text>
        <dbReference type="Rhea" id="RHEA:16237"/>
        <dbReference type="Rhea" id="RHEA-COMP:10747"/>
        <dbReference type="Rhea" id="RHEA-COMP:10748"/>
        <dbReference type="ChEBI" id="CHEBI:83833"/>
        <dbReference type="ChEBI" id="CHEBI:83834"/>
        <dbReference type="EC" id="5.2.1.8"/>
    </reaction>
</comment>
<comment type="subcellular location">
    <subcellularLocation>
        <location>Cytoplasm</location>
    </subcellularLocation>
    <text evidence="1">About half TF is bound to the ribosome near the polypeptide exit tunnel while the other half is free in the cytoplasm.</text>
</comment>
<comment type="domain">
    <text evidence="1">Consists of 3 domains; the N-terminus binds the ribosome, the middle domain has PPIase activity, while the C-terminus has intrinsic chaperone activity on its own.</text>
</comment>
<comment type="similarity">
    <text evidence="2">Belongs to the FKBP-type PPIase family. Tig subfamily.</text>
</comment>
<keyword id="KW-0131">Cell cycle</keyword>
<keyword id="KW-0132">Cell division</keyword>
<keyword id="KW-0143">Chaperone</keyword>
<keyword id="KW-0963">Cytoplasm</keyword>
<keyword id="KW-0413">Isomerase</keyword>
<keyword id="KW-1185">Reference proteome</keyword>
<keyword id="KW-0697">Rotamase</keyword>
<gene>
    <name type="primary">tig</name>
    <name type="ordered locus">TP_0506</name>
</gene>
<sequence length="442" mass="49939">MELQKKFTALAQSQVELEVVVAREDAQRHYQRFVEEYLERARLPGFRKGKVPLAVLERKYGSAIRQDAAAALMEKALEEGFAQASQDSQPLPISRPSLKKKPVFDPDEDFSFAVIYDVFPSVELRNTSGFSLSVPTVSVTEEDVSRELTRIQERNALVTDKGADSCAEVGDIATVDYHEVDDSGAVRPGTERAGVVFTLGVEEGPFALGQDILGMKLGQRCLFAKRAGMLKDEAAQVRVTLKALKQRQLPSLDDELAQDVSDAFRTLDDLTRSVRQNLAEALEAALHEYKRRQLLRILVRENPFSLPESLVVGEMESRWALVMRQFGVSLSGTPQNKLQFFQQWRPEVEEHLKQRVIVELLLKQEQVSVSAEEIETEYVRIASKTGSKEERVREYYAGEEKRRALCEGIRERKLCQKLLGRCVTECGPEQSLTDFLQEQSRA</sequence>
<evidence type="ECO:0000250" key="1"/>
<evidence type="ECO:0000305" key="2"/>
<name>TIG_TREPA</name>
<organism>
    <name type="scientific">Treponema pallidum (strain Nichols)</name>
    <dbReference type="NCBI Taxonomy" id="243276"/>
    <lineage>
        <taxon>Bacteria</taxon>
        <taxon>Pseudomonadati</taxon>
        <taxon>Spirochaetota</taxon>
        <taxon>Spirochaetia</taxon>
        <taxon>Spirochaetales</taxon>
        <taxon>Treponemataceae</taxon>
        <taxon>Treponema</taxon>
    </lineage>
</organism>
<proteinExistence type="inferred from homology"/>
<dbReference type="EC" id="5.2.1.8"/>
<dbReference type="EMBL" id="AE000520">
    <property type="protein sequence ID" value="AAC65494.1"/>
    <property type="molecule type" value="Genomic_DNA"/>
</dbReference>
<dbReference type="PIR" id="A71314">
    <property type="entry name" value="A71314"/>
</dbReference>
<dbReference type="RefSeq" id="WP_010881955.1">
    <property type="nucleotide sequence ID" value="NC_021490.2"/>
</dbReference>
<dbReference type="SMR" id="O83519"/>
<dbReference type="IntAct" id="O83519">
    <property type="interactions" value="3"/>
</dbReference>
<dbReference type="STRING" id="243276.TP_0506"/>
<dbReference type="EnsemblBacteria" id="AAC65494">
    <property type="protein sequence ID" value="AAC65494"/>
    <property type="gene ID" value="TP_0506"/>
</dbReference>
<dbReference type="GeneID" id="93876275"/>
<dbReference type="KEGG" id="tpa:TP_0506"/>
<dbReference type="KEGG" id="tpw:TPANIC_0506"/>
<dbReference type="eggNOG" id="COG0544">
    <property type="taxonomic scope" value="Bacteria"/>
</dbReference>
<dbReference type="HOGENOM" id="CLU_033058_3_1_12"/>
<dbReference type="OrthoDB" id="9767721at2"/>
<dbReference type="Proteomes" id="UP000000811">
    <property type="component" value="Chromosome"/>
</dbReference>
<dbReference type="GO" id="GO:0005737">
    <property type="term" value="C:cytoplasm"/>
    <property type="evidence" value="ECO:0007669"/>
    <property type="project" value="UniProtKB-SubCell"/>
</dbReference>
<dbReference type="GO" id="GO:0003755">
    <property type="term" value="F:peptidyl-prolyl cis-trans isomerase activity"/>
    <property type="evidence" value="ECO:0007669"/>
    <property type="project" value="UniProtKB-UniRule"/>
</dbReference>
<dbReference type="GO" id="GO:0044183">
    <property type="term" value="F:protein folding chaperone"/>
    <property type="evidence" value="ECO:0007669"/>
    <property type="project" value="TreeGrafter"/>
</dbReference>
<dbReference type="GO" id="GO:0043022">
    <property type="term" value="F:ribosome binding"/>
    <property type="evidence" value="ECO:0007669"/>
    <property type="project" value="TreeGrafter"/>
</dbReference>
<dbReference type="GO" id="GO:0051083">
    <property type="term" value="P:'de novo' cotranslational protein folding"/>
    <property type="evidence" value="ECO:0007669"/>
    <property type="project" value="TreeGrafter"/>
</dbReference>
<dbReference type="GO" id="GO:0051301">
    <property type="term" value="P:cell division"/>
    <property type="evidence" value="ECO:0007669"/>
    <property type="project" value="UniProtKB-KW"/>
</dbReference>
<dbReference type="GO" id="GO:0061077">
    <property type="term" value="P:chaperone-mediated protein folding"/>
    <property type="evidence" value="ECO:0007669"/>
    <property type="project" value="TreeGrafter"/>
</dbReference>
<dbReference type="GO" id="GO:0015031">
    <property type="term" value="P:protein transport"/>
    <property type="evidence" value="ECO:0007669"/>
    <property type="project" value="UniProtKB-UniRule"/>
</dbReference>
<dbReference type="GO" id="GO:0043335">
    <property type="term" value="P:protein unfolding"/>
    <property type="evidence" value="ECO:0007669"/>
    <property type="project" value="TreeGrafter"/>
</dbReference>
<dbReference type="Gene3D" id="3.10.50.40">
    <property type="match status" value="1"/>
</dbReference>
<dbReference type="Gene3D" id="3.30.70.1050">
    <property type="entry name" value="Trigger factor ribosome-binding domain"/>
    <property type="match status" value="1"/>
</dbReference>
<dbReference type="Gene3D" id="1.10.3120.10">
    <property type="entry name" value="Trigger factor, C-terminal domain"/>
    <property type="match status" value="1"/>
</dbReference>
<dbReference type="HAMAP" id="MF_00303">
    <property type="entry name" value="Trigger_factor_Tig"/>
    <property type="match status" value="1"/>
</dbReference>
<dbReference type="InterPro" id="IPR046357">
    <property type="entry name" value="PPIase_dom_sf"/>
</dbReference>
<dbReference type="InterPro" id="IPR005215">
    <property type="entry name" value="Trig_fac"/>
</dbReference>
<dbReference type="InterPro" id="IPR008880">
    <property type="entry name" value="Trigger_fac_C"/>
</dbReference>
<dbReference type="InterPro" id="IPR037041">
    <property type="entry name" value="Trigger_fac_C_sf"/>
</dbReference>
<dbReference type="InterPro" id="IPR008881">
    <property type="entry name" value="Trigger_fac_ribosome-bd_bac"/>
</dbReference>
<dbReference type="InterPro" id="IPR036611">
    <property type="entry name" value="Trigger_fac_ribosome-bd_sf"/>
</dbReference>
<dbReference type="InterPro" id="IPR027304">
    <property type="entry name" value="Trigger_fact/SurA_dom_sf"/>
</dbReference>
<dbReference type="NCBIfam" id="TIGR00115">
    <property type="entry name" value="tig"/>
    <property type="match status" value="1"/>
</dbReference>
<dbReference type="PANTHER" id="PTHR30560">
    <property type="entry name" value="TRIGGER FACTOR CHAPERONE AND PEPTIDYL-PROLYL CIS/TRANS ISOMERASE"/>
    <property type="match status" value="1"/>
</dbReference>
<dbReference type="PANTHER" id="PTHR30560:SF3">
    <property type="entry name" value="TRIGGER FACTOR-LIKE PROTEIN TIG, CHLOROPLASTIC"/>
    <property type="match status" value="1"/>
</dbReference>
<dbReference type="Pfam" id="PF05698">
    <property type="entry name" value="Trigger_C"/>
    <property type="match status" value="1"/>
</dbReference>
<dbReference type="Pfam" id="PF05697">
    <property type="entry name" value="Trigger_N"/>
    <property type="match status" value="1"/>
</dbReference>
<dbReference type="PIRSF" id="PIRSF003095">
    <property type="entry name" value="Trigger_factor"/>
    <property type="match status" value="1"/>
</dbReference>
<dbReference type="SUPFAM" id="SSF54534">
    <property type="entry name" value="FKBP-like"/>
    <property type="match status" value="1"/>
</dbReference>
<dbReference type="SUPFAM" id="SSF109998">
    <property type="entry name" value="Triger factor/SurA peptide-binding domain-like"/>
    <property type="match status" value="1"/>
</dbReference>
<dbReference type="SUPFAM" id="SSF102735">
    <property type="entry name" value="Trigger factor ribosome-binding domain"/>
    <property type="match status" value="1"/>
</dbReference>